<accession>O01513</accession>
<protein>
    <recommendedName>
        <fullName evidence="2">U3 small nucleolar ribonucleoprotein protein imp3</fullName>
        <shortName>U3 snoRNP protein imp3</shortName>
    </recommendedName>
    <alternativeName>
        <fullName>40S ribosomal protein S4-like</fullName>
    </alternativeName>
</protein>
<reference key="1">
    <citation type="journal article" date="1998" name="Science">
        <title>Genome sequence of the nematode C. elegans: a platform for investigating biology.</title>
        <authorList>
            <consortium name="The C. elegans sequencing consortium"/>
        </authorList>
    </citation>
    <scope>NUCLEOTIDE SEQUENCE [LARGE SCALE GENOMIC DNA]</scope>
    <source>
        <strain>Bristol N2</strain>
    </source>
</reference>
<comment type="function">
    <text evidence="2">Component of the U3 small nucleolar ribonucleoprotein. Required for the early cleavages at sites A0, A1 and A2 during 18S ribosomal pre-RNA processing (By similarity).</text>
</comment>
<comment type="subunit">
    <text evidence="1 2">Component of a heterotrimeric complex containing imp3, imp4 and mpp10.</text>
</comment>
<comment type="subcellular location">
    <subcellularLocation>
        <location evidence="2">Nucleus</location>
        <location evidence="2">Nucleolus</location>
    </subcellularLocation>
</comment>
<comment type="similarity">
    <text evidence="4">Belongs to the universal ribosomal protein uS4 family.</text>
</comment>
<evidence type="ECO:0000250" key="1"/>
<evidence type="ECO:0000250" key="2">
    <source>
        <dbReference type="UniProtKB" id="P32899"/>
    </source>
</evidence>
<evidence type="ECO:0000255" key="3">
    <source>
        <dbReference type="PROSITE-ProRule" id="PRU00182"/>
    </source>
</evidence>
<evidence type="ECO:0000305" key="4"/>
<sequence>MVRKLKTHEQKLLKKTDFMSWQVDQQGKQGDMLRKFYVKKREHYALYNTLAAKSREVADLIKNLSESDPFRSKCTEDMLTKFYAAGLVPTSDTLERIGKVTGASFARRRLPVVMRNIGMCESVKTASDLVEQGHVRIGTKLVTDPAFMVTRSSEDMITWTKASKIKKHVMDYNNTRDDFDLMD</sequence>
<proteinExistence type="inferred from homology"/>
<feature type="chain" id="PRO_0000132705" description="U3 small nucleolar ribonucleoprotein protein imp3">
    <location>
        <begin position="1"/>
        <end position="183"/>
    </location>
</feature>
<feature type="domain" description="S4 RNA-binding" evidence="3">
    <location>
        <begin position="108"/>
        <end position="174"/>
    </location>
</feature>
<gene>
    <name type="ORF">C48B6.2</name>
</gene>
<organism>
    <name type="scientific">Caenorhabditis elegans</name>
    <dbReference type="NCBI Taxonomy" id="6239"/>
    <lineage>
        <taxon>Eukaryota</taxon>
        <taxon>Metazoa</taxon>
        <taxon>Ecdysozoa</taxon>
        <taxon>Nematoda</taxon>
        <taxon>Chromadorea</taxon>
        <taxon>Rhabditida</taxon>
        <taxon>Rhabditina</taxon>
        <taxon>Rhabditomorpha</taxon>
        <taxon>Rhabditoidea</taxon>
        <taxon>Rhabditidae</taxon>
        <taxon>Peloderinae</taxon>
        <taxon>Caenorhabditis</taxon>
    </lineage>
</organism>
<name>IMP3_CAEEL</name>
<dbReference type="EMBL" id="FO080896">
    <property type="protein sequence ID" value="CCD67579.1"/>
    <property type="molecule type" value="Genomic_DNA"/>
</dbReference>
<dbReference type="PIR" id="T28926">
    <property type="entry name" value="T28926"/>
</dbReference>
<dbReference type="RefSeq" id="NP_491972.1">
    <property type="nucleotide sequence ID" value="NM_059571.8"/>
</dbReference>
<dbReference type="SMR" id="O01513"/>
<dbReference type="BioGRID" id="37865">
    <property type="interactions" value="10"/>
</dbReference>
<dbReference type="FunCoup" id="O01513">
    <property type="interactions" value="938"/>
</dbReference>
<dbReference type="STRING" id="6239.C48B6.2.1"/>
<dbReference type="PaxDb" id="6239-C48B6.2"/>
<dbReference type="PeptideAtlas" id="O01513"/>
<dbReference type="EnsemblMetazoa" id="C48B6.2.1">
    <property type="protein sequence ID" value="C48B6.2.1"/>
    <property type="gene ID" value="WBGene00016740"/>
</dbReference>
<dbReference type="GeneID" id="172420"/>
<dbReference type="KEGG" id="cel:CELE_C48B6.2"/>
<dbReference type="UCSC" id="C48B6.2">
    <property type="organism name" value="c. elegans"/>
</dbReference>
<dbReference type="AGR" id="WB:WBGene00016740"/>
<dbReference type="CTD" id="172420"/>
<dbReference type="WormBase" id="C48B6.2">
    <property type="protein sequence ID" value="CE08804"/>
    <property type="gene ID" value="WBGene00016740"/>
</dbReference>
<dbReference type="eggNOG" id="KOG4655">
    <property type="taxonomic scope" value="Eukaryota"/>
</dbReference>
<dbReference type="GeneTree" id="ENSGT00550000075090"/>
<dbReference type="HOGENOM" id="CLU_097281_0_0_1"/>
<dbReference type="InParanoid" id="O01513"/>
<dbReference type="OMA" id="FRIKHEQ"/>
<dbReference type="OrthoDB" id="10248812at2759"/>
<dbReference type="PhylomeDB" id="O01513"/>
<dbReference type="Reactome" id="R-CEL-6791226">
    <property type="pathway name" value="Major pathway of rRNA processing in the nucleolus and cytosol"/>
</dbReference>
<dbReference type="PRO" id="PR:O01513"/>
<dbReference type="Proteomes" id="UP000001940">
    <property type="component" value="Chromosome I"/>
</dbReference>
<dbReference type="Bgee" id="WBGene00016740">
    <property type="expression patterns" value="Expressed in adult organism and 3 other cell types or tissues"/>
</dbReference>
<dbReference type="GO" id="GO:0034457">
    <property type="term" value="C:Mpp10 complex"/>
    <property type="evidence" value="ECO:0000318"/>
    <property type="project" value="GO_Central"/>
</dbReference>
<dbReference type="GO" id="GO:0032040">
    <property type="term" value="C:small-subunit processome"/>
    <property type="evidence" value="ECO:0000318"/>
    <property type="project" value="GO_Central"/>
</dbReference>
<dbReference type="GO" id="GO:0019843">
    <property type="term" value="F:rRNA binding"/>
    <property type="evidence" value="ECO:0007669"/>
    <property type="project" value="UniProtKB-KW"/>
</dbReference>
<dbReference type="GO" id="GO:0030515">
    <property type="term" value="F:snoRNA binding"/>
    <property type="evidence" value="ECO:0000318"/>
    <property type="project" value="GO_Central"/>
</dbReference>
<dbReference type="GO" id="GO:0042274">
    <property type="term" value="P:ribosomal small subunit biogenesis"/>
    <property type="evidence" value="ECO:0000318"/>
    <property type="project" value="GO_Central"/>
</dbReference>
<dbReference type="GO" id="GO:0006364">
    <property type="term" value="P:rRNA processing"/>
    <property type="evidence" value="ECO:0000318"/>
    <property type="project" value="GO_Central"/>
</dbReference>
<dbReference type="CDD" id="cd00165">
    <property type="entry name" value="S4"/>
    <property type="match status" value="1"/>
</dbReference>
<dbReference type="FunFam" id="3.10.290.10:FF:000006">
    <property type="entry name" value="U3 small nucleolar ribonucleoprotein IMP3"/>
    <property type="match status" value="1"/>
</dbReference>
<dbReference type="Gene3D" id="3.10.290.10">
    <property type="entry name" value="RNA-binding S4 domain"/>
    <property type="match status" value="1"/>
</dbReference>
<dbReference type="InterPro" id="IPR022801">
    <property type="entry name" value="Ribosomal_uS4"/>
</dbReference>
<dbReference type="InterPro" id="IPR001912">
    <property type="entry name" value="Ribosomal_uS4_N"/>
</dbReference>
<dbReference type="InterPro" id="IPR002942">
    <property type="entry name" value="S4_RNA-bd"/>
</dbReference>
<dbReference type="InterPro" id="IPR036986">
    <property type="entry name" value="S4_RNA-bd_sf"/>
</dbReference>
<dbReference type="PANTHER" id="PTHR11831">
    <property type="entry name" value="30S 40S RIBOSOMAL PROTEIN"/>
    <property type="match status" value="1"/>
</dbReference>
<dbReference type="PANTHER" id="PTHR11831:SF1">
    <property type="entry name" value="U3 SMALL NUCLEOLAR RIBONUCLEOPROTEIN PROTEIN IMP3"/>
    <property type="match status" value="1"/>
</dbReference>
<dbReference type="Pfam" id="PF00163">
    <property type="entry name" value="Ribosomal_S4"/>
    <property type="match status" value="1"/>
</dbReference>
<dbReference type="Pfam" id="PF01479">
    <property type="entry name" value="S4"/>
    <property type="match status" value="1"/>
</dbReference>
<dbReference type="SMART" id="SM01390">
    <property type="entry name" value="Ribosomal_S4"/>
    <property type="match status" value="1"/>
</dbReference>
<dbReference type="SMART" id="SM00363">
    <property type="entry name" value="S4"/>
    <property type="match status" value="1"/>
</dbReference>
<dbReference type="SUPFAM" id="SSF55174">
    <property type="entry name" value="Alpha-L RNA-binding motif"/>
    <property type="match status" value="1"/>
</dbReference>
<dbReference type="PROSITE" id="PS50889">
    <property type="entry name" value="S4"/>
    <property type="match status" value="1"/>
</dbReference>
<keyword id="KW-0539">Nucleus</keyword>
<keyword id="KW-1185">Reference proteome</keyword>
<keyword id="KW-0687">Ribonucleoprotein</keyword>
<keyword id="KW-0690">Ribosome biogenesis</keyword>
<keyword id="KW-0694">RNA-binding</keyword>
<keyword id="KW-0699">rRNA-binding</keyword>